<organism>
    <name type="scientific">Yersinia enterocolitica serotype O:8 / biotype 1B (strain NCTC 13174 / 8081)</name>
    <dbReference type="NCBI Taxonomy" id="393305"/>
    <lineage>
        <taxon>Bacteria</taxon>
        <taxon>Pseudomonadati</taxon>
        <taxon>Pseudomonadota</taxon>
        <taxon>Gammaproteobacteria</taxon>
        <taxon>Enterobacterales</taxon>
        <taxon>Yersiniaceae</taxon>
        <taxon>Yersinia</taxon>
    </lineage>
</organism>
<name>RDGC_YERE8</name>
<reference key="1">
    <citation type="journal article" date="2006" name="PLoS Genet.">
        <title>The complete genome sequence and comparative genome analysis of the high pathogenicity Yersinia enterocolitica strain 8081.</title>
        <authorList>
            <person name="Thomson N.R."/>
            <person name="Howard S."/>
            <person name="Wren B.W."/>
            <person name="Holden M.T.G."/>
            <person name="Crossman L."/>
            <person name="Challis G.L."/>
            <person name="Churcher C."/>
            <person name="Mungall K."/>
            <person name="Brooks K."/>
            <person name="Chillingworth T."/>
            <person name="Feltwell T."/>
            <person name="Abdellah Z."/>
            <person name="Hauser H."/>
            <person name="Jagels K."/>
            <person name="Maddison M."/>
            <person name="Moule S."/>
            <person name="Sanders M."/>
            <person name="Whitehead S."/>
            <person name="Quail M.A."/>
            <person name="Dougan G."/>
            <person name="Parkhill J."/>
            <person name="Prentice M.B."/>
        </authorList>
    </citation>
    <scope>NUCLEOTIDE SEQUENCE [LARGE SCALE GENOMIC DNA]</scope>
    <source>
        <strain>NCTC 13174 / 8081</strain>
    </source>
</reference>
<dbReference type="EMBL" id="AM286415">
    <property type="protein sequence ID" value="CAL13218.1"/>
    <property type="molecule type" value="Genomic_DNA"/>
</dbReference>
<dbReference type="RefSeq" id="WP_005160563.1">
    <property type="nucleotide sequence ID" value="NC_008800.1"/>
</dbReference>
<dbReference type="RefSeq" id="YP_001007363.1">
    <property type="nucleotide sequence ID" value="NC_008800.1"/>
</dbReference>
<dbReference type="SMR" id="A1JNV0"/>
<dbReference type="GeneID" id="31410129"/>
<dbReference type="KEGG" id="yen:YE3186"/>
<dbReference type="PATRIC" id="fig|393305.7.peg.3387"/>
<dbReference type="eggNOG" id="COG2974">
    <property type="taxonomic scope" value="Bacteria"/>
</dbReference>
<dbReference type="HOGENOM" id="CLU_052038_1_1_6"/>
<dbReference type="OrthoDB" id="5290530at2"/>
<dbReference type="Proteomes" id="UP000000642">
    <property type="component" value="Chromosome"/>
</dbReference>
<dbReference type="GO" id="GO:0043590">
    <property type="term" value="C:bacterial nucleoid"/>
    <property type="evidence" value="ECO:0007669"/>
    <property type="project" value="TreeGrafter"/>
</dbReference>
<dbReference type="GO" id="GO:0005737">
    <property type="term" value="C:cytoplasm"/>
    <property type="evidence" value="ECO:0007669"/>
    <property type="project" value="UniProtKB-UniRule"/>
</dbReference>
<dbReference type="GO" id="GO:0003690">
    <property type="term" value="F:double-stranded DNA binding"/>
    <property type="evidence" value="ECO:0007669"/>
    <property type="project" value="TreeGrafter"/>
</dbReference>
<dbReference type="GO" id="GO:0006310">
    <property type="term" value="P:DNA recombination"/>
    <property type="evidence" value="ECO:0007669"/>
    <property type="project" value="UniProtKB-UniRule"/>
</dbReference>
<dbReference type="GO" id="GO:0000018">
    <property type="term" value="P:regulation of DNA recombination"/>
    <property type="evidence" value="ECO:0007669"/>
    <property type="project" value="TreeGrafter"/>
</dbReference>
<dbReference type="HAMAP" id="MF_00194">
    <property type="entry name" value="RdgC"/>
    <property type="match status" value="1"/>
</dbReference>
<dbReference type="InterPro" id="IPR007476">
    <property type="entry name" value="RdgC"/>
</dbReference>
<dbReference type="NCBIfam" id="NF001460">
    <property type="entry name" value="PRK00321.1-1"/>
    <property type="match status" value="1"/>
</dbReference>
<dbReference type="NCBIfam" id="NF001462">
    <property type="entry name" value="PRK00321.1-3"/>
    <property type="match status" value="1"/>
</dbReference>
<dbReference type="NCBIfam" id="NF001464">
    <property type="entry name" value="PRK00321.1-5"/>
    <property type="match status" value="1"/>
</dbReference>
<dbReference type="PANTHER" id="PTHR38103">
    <property type="entry name" value="RECOMBINATION-ASSOCIATED PROTEIN RDGC"/>
    <property type="match status" value="1"/>
</dbReference>
<dbReference type="PANTHER" id="PTHR38103:SF1">
    <property type="entry name" value="RECOMBINATION-ASSOCIATED PROTEIN RDGC"/>
    <property type="match status" value="1"/>
</dbReference>
<dbReference type="Pfam" id="PF04381">
    <property type="entry name" value="RdgC"/>
    <property type="match status" value="1"/>
</dbReference>
<feature type="chain" id="PRO_1000021247" description="Recombination-associated protein RdgC">
    <location>
        <begin position="1"/>
        <end position="303"/>
    </location>
</feature>
<proteinExistence type="inferred from homology"/>
<accession>A1JNV0</accession>
<gene>
    <name evidence="1" type="primary">rdgC</name>
    <name type="ordered locus">YE3186</name>
</gene>
<protein>
    <recommendedName>
        <fullName evidence="1">Recombination-associated protein RdgC</fullName>
    </recommendedName>
</protein>
<evidence type="ECO:0000255" key="1">
    <source>
        <dbReference type="HAMAP-Rule" id="MF_00194"/>
    </source>
</evidence>
<comment type="function">
    <text evidence="1">May be involved in recombination.</text>
</comment>
<comment type="subcellular location">
    <subcellularLocation>
        <location evidence="1">Cytoplasm</location>
        <location evidence="1">Nucleoid</location>
    </subcellularLocation>
</comment>
<comment type="similarity">
    <text evidence="1">Belongs to the RdgC family.</text>
</comment>
<sequence length="303" mass="34192">MLWFKNLMVYRLSREVSLSADEMEKQLSAFSFTPCGSQDMAKTGWVSPMGSHSDALTHTVNGQIVICARKEEKILPSPVIKQELQAKIERLEGEQHRKLKKTEKDSLKDEVLHSLLPRAFSRFNQTFLWIDTVNDLIMVDAASAKRAEDTLALLRKSLGSLPVVPLTLENPIELTLTEWVRSKELPSGFALMDEAELKAILEDGGVIRCKKQDLFSDEIAVHIEAGKLVTKLALDWQERVQLVLSDDGSLKRLKFSDTLREQNEDIDQEDFAQRFDADFILMTSELAALIKNLIEALGGEAQH</sequence>
<keyword id="KW-0963">Cytoplasm</keyword>
<keyword id="KW-0233">DNA recombination</keyword>